<sequence>MGLQETIGIEIVSVEKGKAVVQLEVTEKVHQPFGYLHGGVSVVLAEHAASIGAAKSIEPDEIVFGLEINANHLASKQAGLVTATAEAIHIGKSTQVWEIKITDETEKLLCISRCTIAVKKKRK</sequence>
<accession>A0A0H3GEM5</accession>
<organism>
    <name type="scientific">Listeria monocytogenes serotype 1/2a (strain 10403S)</name>
    <dbReference type="NCBI Taxonomy" id="393133"/>
    <lineage>
        <taxon>Bacteria</taxon>
        <taxon>Bacillati</taxon>
        <taxon>Bacillota</taxon>
        <taxon>Bacilli</taxon>
        <taxon>Bacillales</taxon>
        <taxon>Listeriaceae</taxon>
        <taxon>Listeria</taxon>
    </lineage>
</organism>
<evidence type="ECO:0000250" key="1">
    <source>
        <dbReference type="UniProtKB" id="P77781"/>
    </source>
</evidence>
<evidence type="ECO:0000269" key="2">
    <source>
    </source>
</evidence>
<evidence type="ECO:0000303" key="3">
    <source>
    </source>
</evidence>
<evidence type="ECO:0000305" key="4"/>
<evidence type="ECO:0000312" key="5">
    <source>
        <dbReference type="EMBL" id="AEO07362.1"/>
    </source>
</evidence>
<dbReference type="EC" id="3.1.2.28" evidence="2"/>
<dbReference type="EMBL" id="CP002002">
    <property type="protein sequence ID" value="AEO07362.1"/>
    <property type="molecule type" value="Genomic_DNA"/>
</dbReference>
<dbReference type="RefSeq" id="WP_003722411.1">
    <property type="nucleotide sequence ID" value="NC_017544.1"/>
</dbReference>
<dbReference type="SMR" id="A0A0H3GEM5"/>
<dbReference type="KEGG" id="lmt:LMRG_02730"/>
<dbReference type="HOGENOM" id="CLU_089876_13_1_9"/>
<dbReference type="UniPathway" id="UPA00079"/>
<dbReference type="Proteomes" id="UP000001288">
    <property type="component" value="Chromosome"/>
</dbReference>
<dbReference type="GO" id="GO:0005829">
    <property type="term" value="C:cytosol"/>
    <property type="evidence" value="ECO:0007669"/>
    <property type="project" value="TreeGrafter"/>
</dbReference>
<dbReference type="GO" id="GO:0061522">
    <property type="term" value="F:1,4-dihydroxy-2-naphthoyl-CoA thioesterase activity"/>
    <property type="evidence" value="ECO:0007669"/>
    <property type="project" value="TreeGrafter"/>
</dbReference>
<dbReference type="GO" id="GO:0009234">
    <property type="term" value="P:menaquinone biosynthetic process"/>
    <property type="evidence" value="ECO:0007669"/>
    <property type="project" value="UniProtKB-UniPathway"/>
</dbReference>
<dbReference type="CDD" id="cd03443">
    <property type="entry name" value="PaaI_thioesterase"/>
    <property type="match status" value="1"/>
</dbReference>
<dbReference type="Gene3D" id="3.10.129.10">
    <property type="entry name" value="Hotdog Thioesterase"/>
    <property type="match status" value="1"/>
</dbReference>
<dbReference type="InterPro" id="IPR029069">
    <property type="entry name" value="HotDog_dom_sf"/>
</dbReference>
<dbReference type="InterPro" id="IPR003736">
    <property type="entry name" value="PAAI_dom"/>
</dbReference>
<dbReference type="InterPro" id="IPR006683">
    <property type="entry name" value="Thioestr_dom"/>
</dbReference>
<dbReference type="NCBIfam" id="NF047425">
    <property type="entry name" value="MenI_Listeria"/>
    <property type="match status" value="1"/>
</dbReference>
<dbReference type="NCBIfam" id="TIGR00369">
    <property type="entry name" value="unchar_dom_1"/>
    <property type="match status" value="1"/>
</dbReference>
<dbReference type="PANTHER" id="PTHR43240">
    <property type="entry name" value="1,4-DIHYDROXY-2-NAPHTHOYL-COA THIOESTERASE 1"/>
    <property type="match status" value="1"/>
</dbReference>
<dbReference type="PANTHER" id="PTHR43240:SF5">
    <property type="entry name" value="1,4-DIHYDROXY-2-NAPHTHOYL-COA THIOESTERASE 1"/>
    <property type="match status" value="1"/>
</dbReference>
<dbReference type="Pfam" id="PF03061">
    <property type="entry name" value="4HBT"/>
    <property type="match status" value="1"/>
</dbReference>
<dbReference type="SUPFAM" id="SSF54637">
    <property type="entry name" value="Thioesterase/thiol ester dehydrase-isomerase"/>
    <property type="match status" value="1"/>
</dbReference>
<gene>
    <name evidence="3" type="primary">menI</name>
    <name evidence="5" type="ordered locus">LMRG_02730</name>
</gene>
<name>MENI_LISM4</name>
<proteinExistence type="evidence at protein level"/>
<keyword id="KW-0378">Hydrolase</keyword>
<keyword id="KW-0474">Menaquinone biosynthesis</keyword>
<keyword id="KW-0843">Virulence</keyword>
<reference key="1">
    <citation type="submission" date="2010-04" db="EMBL/GenBank/DDBJ databases">
        <title>The genome sequence of Listeria monocytogenes strain 10403S.</title>
        <authorList>
            <consortium name="The Broad Institute Genome Sequencing Platform"/>
            <consortium name="The Broad Institute Genome Sequencing Center for Infectious Disease"/>
            <person name="Borowsky M."/>
            <person name="Borodovsky M."/>
            <person name="Young S.K."/>
            <person name="Zeng Q."/>
            <person name="Koehrsen M."/>
            <person name="Fitzgerald M."/>
            <person name="Wiedmann M."/>
            <person name="Swaminathan B."/>
            <person name="Lauer P."/>
            <person name="Portnoy D."/>
            <person name="Cossart P."/>
            <person name="Buchrieser C."/>
            <person name="Higgins D."/>
            <person name="Abouelleil A."/>
            <person name="Alvarado L."/>
            <person name="Arachchi H.M."/>
            <person name="Berlin A."/>
            <person name="Borenstein D."/>
            <person name="Brown A."/>
            <person name="Chapman S.B."/>
            <person name="Chen Z."/>
            <person name="Dunbar C.D."/>
            <person name="Engels R."/>
            <person name="Freedman E."/>
            <person name="Gearin G."/>
            <person name="Gellesch M."/>
            <person name="Goldberg J."/>
            <person name="Griggs A."/>
            <person name="Gujja S."/>
            <person name="Heilman E."/>
            <person name="Heiman D."/>
            <person name="Howarth C."/>
            <person name="Jen D."/>
            <person name="Larson L."/>
            <person name="Lui A."/>
            <person name="MacDonald J."/>
            <person name="Mehta T."/>
            <person name="Montmayeur A."/>
            <person name="Neiman D."/>
            <person name="Park D."/>
            <person name="Pearson M."/>
            <person name="Priest M."/>
            <person name="Richards J."/>
            <person name="Roberts A."/>
            <person name="Saif S."/>
            <person name="Shea T."/>
            <person name="Shenoy N."/>
            <person name="Sisk P."/>
            <person name="Stolte C."/>
            <person name="Sykes S."/>
            <person name="Walk T."/>
            <person name="White J."/>
            <person name="Yandava C."/>
            <person name="Haas B."/>
            <person name="Nusbaum C."/>
            <person name="Birren B."/>
        </authorList>
    </citation>
    <scope>NUCLEOTIDE SEQUENCE [LARGE SCALE GENOMIC DNA]</scope>
    <source>
        <strain>10403S</strain>
    </source>
</reference>
<reference key="2">
    <citation type="journal article" date="2021" name="Infect. Immun.">
        <title>Listeria monocytogenes MenI encodes a DHNA-CoA thioesterase necessary for menaquinone biosynthesis, cytosolic survival, and virulence.</title>
        <authorList>
            <person name="Smith H.B."/>
            <person name="Li T.L."/>
            <person name="Liao M.K."/>
            <person name="Chen G.Y."/>
            <person name="Guo Z."/>
            <person name="Sauer J.D."/>
        </authorList>
    </citation>
    <scope>FUNCTION</scope>
    <scope>CATALYTIC ACTIVITY</scope>
    <scope>BIOPHYSICOCHEMICAL PROPERTIES</scope>
    <scope>PATHWAY</scope>
    <scope>DISRUPTION PHENOTYPE</scope>
    <source>
        <strain>10403S</strain>
    </source>
</reference>
<comment type="function">
    <text evidence="2">Catalyzes the hydrolysis of 1,4-dihydroxy-2-naphthoyl-CoA (DHNA-CoA) to 1,4-dihydroxy-2-naphthoate (DHNA) and free coenzyme A (PubMed:33619030). Production of DHNA is required for protection against bacteriolysis in the cytosol of macrophages and tissue-specific virulence in vivo, suggesting that MenI is required to protect the bacteria from killing in the macrophage cytosol (PubMed:33619030).</text>
</comment>
<comment type="catalytic activity">
    <reaction evidence="2">
        <text>1,4-dihydroxy-2-naphthoyl-CoA + H2O = 1,4-dihydroxy-2-naphthoate + CoA + H(+)</text>
        <dbReference type="Rhea" id="RHEA:26309"/>
        <dbReference type="ChEBI" id="CHEBI:11173"/>
        <dbReference type="ChEBI" id="CHEBI:15377"/>
        <dbReference type="ChEBI" id="CHEBI:15378"/>
        <dbReference type="ChEBI" id="CHEBI:57287"/>
        <dbReference type="ChEBI" id="CHEBI:58897"/>
        <dbReference type="EC" id="3.1.2.28"/>
    </reaction>
    <physiologicalReaction direction="left-to-right" evidence="2">
        <dbReference type="Rhea" id="RHEA:26310"/>
    </physiologicalReaction>
</comment>
<comment type="biophysicochemical properties">
    <kinetics>
        <KM evidence="2">14.2 uM for DHNA-CoA</KM>
        <text evidence="2">kcat is 14.9 sec(-1).</text>
    </kinetics>
</comment>
<comment type="pathway">
    <text evidence="2">Quinol/quinone metabolism; menaquinone biosynthesis.</text>
</comment>
<comment type="disruption phenotype">
    <text evidence="2">Deletion of the gene results in an ablated membrane potential, indicative of a non-functional electron transport chain (ETC) and an inability to aerobically respire (PubMed:33619030). Mutants fail to replicate in minimal defined medium and are killed in the cytosol approximately 4- to 6-fold more frequently than the wild-type strain (PubMed:33619030).</text>
</comment>
<comment type="similarity">
    <text evidence="4">Belongs to the thioesterase PaaI family.</text>
</comment>
<feature type="chain" id="PRO_0000456572" description="1,4-dihydroxy-2-naphthoyl-CoA hydrolase">
    <location>
        <begin position="1"/>
        <end position="123"/>
    </location>
</feature>
<feature type="active site" description="Nucleophile or proton acceptor" evidence="1">
    <location>
        <position position="46"/>
    </location>
</feature>
<protein>
    <recommendedName>
        <fullName evidence="4">1,4-dihydroxy-2-naphthoyl-CoA hydrolase</fullName>
        <shortName evidence="4">DHNA-CoA hydrolase</shortName>
        <ecNumber evidence="2">3.1.2.28</ecNumber>
    </recommendedName>
    <alternativeName>
        <fullName evidence="3">1,4-dihydroxy-2-naphthoyl-coenzyme A thioesterase</fullName>
        <shortName evidence="3">DHNA-CoA thioesterase</shortName>
    </alternativeName>
</protein>